<keyword id="KW-0963">Cytoplasm</keyword>
<keyword id="KW-0328">Glycosyltransferase</keyword>
<keyword id="KW-0660">Purine salvage</keyword>
<keyword id="KW-0808">Transferase</keyword>
<evidence type="ECO:0000255" key="1">
    <source>
        <dbReference type="HAMAP-Rule" id="MF_00004"/>
    </source>
</evidence>
<evidence type="ECO:0000305" key="2"/>
<proteinExistence type="inferred from homology"/>
<comment type="function">
    <text evidence="1">Catalyzes a salvage reaction resulting in the formation of AMP, that is energically less costly than de novo synthesis.</text>
</comment>
<comment type="catalytic activity">
    <reaction evidence="1">
        <text>AMP + diphosphate = 5-phospho-alpha-D-ribose 1-diphosphate + adenine</text>
        <dbReference type="Rhea" id="RHEA:16609"/>
        <dbReference type="ChEBI" id="CHEBI:16708"/>
        <dbReference type="ChEBI" id="CHEBI:33019"/>
        <dbReference type="ChEBI" id="CHEBI:58017"/>
        <dbReference type="ChEBI" id="CHEBI:456215"/>
        <dbReference type="EC" id="2.4.2.7"/>
    </reaction>
</comment>
<comment type="pathway">
    <text evidence="1">Purine metabolism; AMP biosynthesis via salvage pathway; AMP from adenine: step 1/1.</text>
</comment>
<comment type="subunit">
    <text evidence="1">Homodimer.</text>
</comment>
<comment type="subcellular location">
    <subcellularLocation>
        <location evidence="1">Cytoplasm</location>
    </subcellularLocation>
</comment>
<comment type="similarity">
    <text evidence="1">Belongs to the purine/pyrimidine phosphoribosyltransferase family.</text>
</comment>
<comment type="sequence caution" evidence="2">
    <conflict type="erroneous initiation">
        <sequence resource="EMBL-CDS" id="ABX73722"/>
    </conflict>
</comment>
<reference key="1">
    <citation type="journal article" date="2008" name="Genomics">
        <title>Characterization of ST-4821 complex, a unique Neisseria meningitidis clone.</title>
        <authorList>
            <person name="Peng J."/>
            <person name="Yang L."/>
            <person name="Yang F."/>
            <person name="Yang J."/>
            <person name="Yan Y."/>
            <person name="Nie H."/>
            <person name="Zhang X."/>
            <person name="Xiong Z."/>
            <person name="Jiang Y."/>
            <person name="Cheng F."/>
            <person name="Xu X."/>
            <person name="Chen S."/>
            <person name="Sun L."/>
            <person name="Li W."/>
            <person name="Shen Y."/>
            <person name="Shao Z."/>
            <person name="Liang X."/>
            <person name="Xu J."/>
            <person name="Jin Q."/>
        </authorList>
    </citation>
    <scope>NUCLEOTIDE SEQUENCE [LARGE SCALE GENOMIC DNA]</scope>
    <source>
        <strain>053442</strain>
    </source>
</reference>
<organism>
    <name type="scientific">Neisseria meningitidis serogroup C (strain 053442)</name>
    <dbReference type="NCBI Taxonomy" id="374833"/>
    <lineage>
        <taxon>Bacteria</taxon>
        <taxon>Pseudomonadati</taxon>
        <taxon>Pseudomonadota</taxon>
        <taxon>Betaproteobacteria</taxon>
        <taxon>Neisseriales</taxon>
        <taxon>Neisseriaceae</taxon>
        <taxon>Neisseria</taxon>
    </lineage>
</organism>
<protein>
    <recommendedName>
        <fullName evidence="1">Adenine phosphoribosyltransferase</fullName>
        <shortName evidence="1">APRT</shortName>
        <ecNumber evidence="1">2.4.2.7</ecNumber>
    </recommendedName>
</protein>
<name>APT_NEIM0</name>
<feature type="chain" id="PRO_0000329362" description="Adenine phosphoribosyltransferase">
    <location>
        <begin position="1"/>
        <end position="188"/>
    </location>
</feature>
<sequence>MLVHPEAMSVGALADKIRKIENWPQKGILFHDITPVLQSAEYFRLLVDLLVYRYMDQKIDIVAGLDARGFIIGAALAYQLNVGFVPIRKKGKLPFETVSQSYALEYGEAAVEIHTDAVKPGSRVLLVDDLVATGGTMLAGLELIRKLGGEIVEAAAILEFTDLQGGKNIRASGAPLFTLLQNEGCMKG</sequence>
<dbReference type="EC" id="2.4.2.7" evidence="1"/>
<dbReference type="EMBL" id="CP000381">
    <property type="protein sequence ID" value="ABX73722.1"/>
    <property type="status" value="ALT_INIT"/>
    <property type="molecule type" value="Genomic_DNA"/>
</dbReference>
<dbReference type="SMR" id="A9M1N3"/>
<dbReference type="KEGG" id="nmn:NMCC_1572"/>
<dbReference type="HOGENOM" id="CLU_063339_3_0_4"/>
<dbReference type="UniPathway" id="UPA00588">
    <property type="reaction ID" value="UER00646"/>
</dbReference>
<dbReference type="Proteomes" id="UP000001177">
    <property type="component" value="Chromosome"/>
</dbReference>
<dbReference type="GO" id="GO:0005737">
    <property type="term" value="C:cytoplasm"/>
    <property type="evidence" value="ECO:0007669"/>
    <property type="project" value="UniProtKB-SubCell"/>
</dbReference>
<dbReference type="GO" id="GO:0002055">
    <property type="term" value="F:adenine binding"/>
    <property type="evidence" value="ECO:0007669"/>
    <property type="project" value="TreeGrafter"/>
</dbReference>
<dbReference type="GO" id="GO:0003999">
    <property type="term" value="F:adenine phosphoribosyltransferase activity"/>
    <property type="evidence" value="ECO:0007669"/>
    <property type="project" value="UniProtKB-UniRule"/>
</dbReference>
<dbReference type="GO" id="GO:0016208">
    <property type="term" value="F:AMP binding"/>
    <property type="evidence" value="ECO:0007669"/>
    <property type="project" value="TreeGrafter"/>
</dbReference>
<dbReference type="GO" id="GO:0006168">
    <property type="term" value="P:adenine salvage"/>
    <property type="evidence" value="ECO:0007669"/>
    <property type="project" value="InterPro"/>
</dbReference>
<dbReference type="GO" id="GO:0044209">
    <property type="term" value="P:AMP salvage"/>
    <property type="evidence" value="ECO:0007669"/>
    <property type="project" value="UniProtKB-UniRule"/>
</dbReference>
<dbReference type="GO" id="GO:0006166">
    <property type="term" value="P:purine ribonucleoside salvage"/>
    <property type="evidence" value="ECO:0007669"/>
    <property type="project" value="UniProtKB-KW"/>
</dbReference>
<dbReference type="CDD" id="cd06223">
    <property type="entry name" value="PRTases_typeI"/>
    <property type="match status" value="1"/>
</dbReference>
<dbReference type="FunFam" id="3.40.50.2020:FF:000021">
    <property type="entry name" value="Adenine phosphoribosyltransferase"/>
    <property type="match status" value="1"/>
</dbReference>
<dbReference type="Gene3D" id="3.40.50.2020">
    <property type="match status" value="1"/>
</dbReference>
<dbReference type="HAMAP" id="MF_00004">
    <property type="entry name" value="Aden_phosphoribosyltr"/>
    <property type="match status" value="1"/>
</dbReference>
<dbReference type="InterPro" id="IPR005764">
    <property type="entry name" value="Ade_phspho_trans"/>
</dbReference>
<dbReference type="InterPro" id="IPR000836">
    <property type="entry name" value="PRibTrfase_dom"/>
</dbReference>
<dbReference type="InterPro" id="IPR029057">
    <property type="entry name" value="PRTase-like"/>
</dbReference>
<dbReference type="InterPro" id="IPR050054">
    <property type="entry name" value="UPRTase/APRTase"/>
</dbReference>
<dbReference type="NCBIfam" id="TIGR01090">
    <property type="entry name" value="apt"/>
    <property type="match status" value="1"/>
</dbReference>
<dbReference type="NCBIfam" id="NF002634">
    <property type="entry name" value="PRK02304.1-3"/>
    <property type="match status" value="1"/>
</dbReference>
<dbReference type="NCBIfam" id="NF002636">
    <property type="entry name" value="PRK02304.1-5"/>
    <property type="match status" value="1"/>
</dbReference>
<dbReference type="PANTHER" id="PTHR32315">
    <property type="entry name" value="ADENINE PHOSPHORIBOSYLTRANSFERASE"/>
    <property type="match status" value="1"/>
</dbReference>
<dbReference type="PANTHER" id="PTHR32315:SF3">
    <property type="entry name" value="ADENINE PHOSPHORIBOSYLTRANSFERASE"/>
    <property type="match status" value="1"/>
</dbReference>
<dbReference type="Pfam" id="PF00156">
    <property type="entry name" value="Pribosyltran"/>
    <property type="match status" value="1"/>
</dbReference>
<dbReference type="SUPFAM" id="SSF53271">
    <property type="entry name" value="PRTase-like"/>
    <property type="match status" value="1"/>
</dbReference>
<dbReference type="PROSITE" id="PS00103">
    <property type="entry name" value="PUR_PYR_PR_TRANSFER"/>
    <property type="match status" value="1"/>
</dbReference>
<accession>A9M1N3</accession>
<gene>
    <name evidence="1" type="primary">apt</name>
    <name type="ordered locus">NMCC_1572</name>
</gene>